<gene>
    <name type="primary">kdm3a-b</name>
    <name type="synonym">jhdm2a-b</name>
    <name type="synonym">jmjd1a-b</name>
</gene>
<feature type="chain" id="PRO_0000234372" description="Lysine-specific demethylase 3A-B">
    <location>
        <begin position="1"/>
        <end position="1334"/>
    </location>
</feature>
<feature type="domain" description="JmjC" evidence="4">
    <location>
        <begin position="1089"/>
        <end position="1294"/>
    </location>
</feature>
<feature type="zinc finger region" description="C6-type" evidence="3">
    <location>
        <begin position="684"/>
        <end position="709"/>
    </location>
</feature>
<feature type="region of interest" description="Disordered" evidence="5">
    <location>
        <begin position="243"/>
        <end position="288"/>
    </location>
</feature>
<feature type="region of interest" description="Disordered" evidence="5">
    <location>
        <begin position="352"/>
        <end position="382"/>
    </location>
</feature>
<feature type="region of interest" description="Disordered" evidence="5">
    <location>
        <begin position="514"/>
        <end position="533"/>
    </location>
</feature>
<feature type="short sequence motif" description="LXXLL motif">
    <location>
        <begin position="897"/>
        <end position="901"/>
    </location>
</feature>
<feature type="compositionally biased region" description="Basic and acidic residues" evidence="5">
    <location>
        <begin position="267"/>
        <end position="283"/>
    </location>
</feature>
<feature type="binding site" evidence="4">
    <location>
        <position position="1133"/>
    </location>
    <ligand>
        <name>Fe cation</name>
        <dbReference type="ChEBI" id="CHEBI:24875"/>
        <note>catalytic</note>
    </ligand>
</feature>
<feature type="binding site" evidence="4">
    <location>
        <position position="1135"/>
    </location>
    <ligand>
        <name>Fe cation</name>
        <dbReference type="ChEBI" id="CHEBI:24875"/>
        <note>catalytic</note>
    </ligand>
</feature>
<feature type="binding site" evidence="4">
    <location>
        <position position="1262"/>
    </location>
    <ligand>
        <name>Fe cation</name>
        <dbReference type="ChEBI" id="CHEBI:24875"/>
        <note>catalytic</note>
    </ligand>
</feature>
<sequence length="1334" mass="149945">MVLTQQENLSVLVGQRFVCLLGKDLQVDPDTVSKWPWKSGIVRAASHKDLHCPEIKIFVEYDDESWENRTWLELYGPTVKMFLVEHNLVLADHASPSNPSVSVQCPAMVYKVLVGKFSLGSTACLQFLGEKDKVFLSKELVKPVRDRETLKQFMQDNKTFNKAFQELIRKSVDESRLLQAARNIISMPINVYSMDPSMQWFSGTITNVRTASRALEIKCEQLPSLKIIDPALLHVVLVHNYGDQNDKSKKPRASKRKSQDTESEDQTEVKQTRNEEVPSKDVTQKTSFLTYRRDDGKTLVVVDNPKATTNNLFNYMTPATEDQQKVQQSLSSKQSVPVGFGETLLGCAATTPGIQNAATPPPANSPPSFGAATPQGKGSQNLPGDTTVLNGDANREETNLFLSAAASQGNKRSMGFGIMESPSTFSSLSTMPSWSGQPNSENGLKSENLFAAFTKSSTVFPKGFEFSVKSFPEQKMLSVTDSPKTALQKTCVPQQEQNVIRKPENNHTSVKAIKPQEPPYTKSPNKTDGVTYPKSILLNPQKLKRLQQSGDCFVQDGSCNNIAPHLHKCRECRLDRFGRSREQRDSAVFCRFFHFRRLHFNKHGMLKEGGFLTPNKYDAEAINLWLPLASSVVDLDLDTAKYILANIGDHFCKLVMSEKEVMSSTDPSKQVAWKRAVRGVREMCDACDTTIFNLHWVCPKCGFGVCVDCYRMRKKSLSSGEEGNEMFSWLKCMKGQLHEPENLMPTQIVPGKALYDVCDIVHSVRGRWGIKSNCSCSNKHMRPVSKPVVKEEVKPSTPEPEPIKSLLAQPNVCTVPDPPAIPNKPPTPACSSPLSWLTNFPQTIVNKENKDNLFASTSKSEHKPLPSFASFGKPVSALQTFGSSILTPTTSNNSGFLRNLLNASTLKQETSDKSTPKILDDIFASLVQSRPLSDFDRKPQGLPIQPSLMGFNTPHYWLCDNRLLCLQDPNNKSNWNVFRECWKQGQPVMVSGVHNNLNSELWRPESFRREFGDQEADLVNCRTNDIITGATVGDFWDGFEDIPGRLKNDTGESMVLKLKDWPPGEDFRDTMLSRFEDLMNNIPLPEYTRREGKLNLAARLPTYFVRPDLGPKMYNAYGLITPEDRKYGTTNLHLDVSDAANVMVYVGIPKGEHDQDQEVLRTIQDGDADELTIKRFIEFKEKPGALWHIYAAKDTEKIRQFLKKVAEEEGHENPPDHDPIHDQSWYLDNILRKRLLQEHGVQGWAIVQFLGDAVFIPAGAPHQVHNLYSCIKVAEDFVSPEHVKHCFCLTQEFRYLSHTHTNHEDKLQVKNVIYHAVKDSIAILKANESSLGKL</sequence>
<proteinExistence type="evidence at transcript level"/>
<accession>Q5HZN1</accession>
<comment type="function">
    <text evidence="1">Histone demethylase that specifically demethylates 'Lys-9' of histone H3, thereby playing a central role in histone code. Preferentially demethylates mono- and dimethylated H3 'Lys-9' residue, with a preference for dimethylated residue, while it has weak or no activity on trimethylated H3 'Lys-9'. Demethylation of Lys residue generates formaldehyde and succinate (By similarity).</text>
</comment>
<comment type="catalytic activity">
    <reaction evidence="2">
        <text>N(6),N(6)-dimethyl-L-lysyl(9)-[histone H3] + 2 2-oxoglutarate + 2 O2 = L-lysyl(9)-[histone H3] + 2 formaldehyde + 2 succinate + 2 CO2</text>
        <dbReference type="Rhea" id="RHEA:60188"/>
        <dbReference type="Rhea" id="RHEA-COMP:15541"/>
        <dbReference type="Rhea" id="RHEA-COMP:15546"/>
        <dbReference type="ChEBI" id="CHEBI:15379"/>
        <dbReference type="ChEBI" id="CHEBI:16526"/>
        <dbReference type="ChEBI" id="CHEBI:16810"/>
        <dbReference type="ChEBI" id="CHEBI:16842"/>
        <dbReference type="ChEBI" id="CHEBI:29969"/>
        <dbReference type="ChEBI" id="CHEBI:30031"/>
        <dbReference type="ChEBI" id="CHEBI:61976"/>
        <dbReference type="EC" id="1.14.11.65"/>
    </reaction>
</comment>
<comment type="cofactor">
    <cofactor evidence="1">
        <name>Fe(2+)</name>
        <dbReference type="ChEBI" id="CHEBI:29033"/>
    </cofactor>
    <text evidence="1">Binds 1 Fe(2+) ion per subunit.</text>
</comment>
<comment type="subcellular location">
    <subcellularLocation>
        <location evidence="1">Cytoplasm</location>
    </subcellularLocation>
    <subcellularLocation>
        <location evidence="1">Nucleus</location>
    </subcellularLocation>
</comment>
<comment type="domain">
    <text evidence="1">The JmjC domain and the C6-type zinc-finger are required for the demethylation activity.</text>
</comment>
<comment type="domain">
    <text evidence="1">Leu-Xaa-Xaa-Leu-Leu (LXXLL) motifs are known to mediate the association with nuclear receptors.</text>
</comment>
<comment type="similarity">
    <text evidence="6">Belongs to the JHDM2 histone demethylase family.</text>
</comment>
<dbReference type="EC" id="1.14.11.65" evidence="2"/>
<dbReference type="EMBL" id="BC088951">
    <property type="protein sequence ID" value="AAH88951.1"/>
    <property type="molecule type" value="mRNA"/>
</dbReference>
<dbReference type="RefSeq" id="NP_001088971.1">
    <property type="nucleotide sequence ID" value="NM_001095502.1"/>
</dbReference>
<dbReference type="SMR" id="Q5HZN1"/>
<dbReference type="BioGRID" id="106431">
    <property type="interactions" value="1"/>
</dbReference>
<dbReference type="IntAct" id="Q5HZN1">
    <property type="interactions" value="1"/>
</dbReference>
<dbReference type="DNASU" id="496351"/>
<dbReference type="GeneID" id="496351"/>
<dbReference type="KEGG" id="xla:496351"/>
<dbReference type="AGR" id="Xenbase:XB-GENE-1012805"/>
<dbReference type="CTD" id="496351"/>
<dbReference type="Xenbase" id="XB-GENE-1012805">
    <property type="gene designation" value="kdm3a.S"/>
</dbReference>
<dbReference type="OrthoDB" id="1667110at2759"/>
<dbReference type="Proteomes" id="UP000186698">
    <property type="component" value="Chromosome 1S"/>
</dbReference>
<dbReference type="Bgee" id="496351">
    <property type="expression patterns" value="Expressed in egg cell and 19 other cell types or tissues"/>
</dbReference>
<dbReference type="GO" id="GO:0000785">
    <property type="term" value="C:chromatin"/>
    <property type="evidence" value="ECO:0000318"/>
    <property type="project" value="GO_Central"/>
</dbReference>
<dbReference type="GO" id="GO:0005737">
    <property type="term" value="C:cytoplasm"/>
    <property type="evidence" value="ECO:0007669"/>
    <property type="project" value="UniProtKB-SubCell"/>
</dbReference>
<dbReference type="GO" id="GO:0000118">
    <property type="term" value="C:histone deacetylase complex"/>
    <property type="evidence" value="ECO:0000318"/>
    <property type="project" value="GO_Central"/>
</dbReference>
<dbReference type="GO" id="GO:0031490">
    <property type="term" value="F:chromatin DNA binding"/>
    <property type="evidence" value="ECO:0000318"/>
    <property type="project" value="GO_Central"/>
</dbReference>
<dbReference type="GO" id="GO:0032454">
    <property type="term" value="F:histone H3K9 demethylase activity"/>
    <property type="evidence" value="ECO:0000318"/>
    <property type="project" value="GO_Central"/>
</dbReference>
<dbReference type="GO" id="GO:0140683">
    <property type="term" value="F:histone H3K9me/H3K9me2 demethylase activity"/>
    <property type="evidence" value="ECO:0007669"/>
    <property type="project" value="UniProtKB-EC"/>
</dbReference>
<dbReference type="GO" id="GO:0003712">
    <property type="term" value="F:transcription coregulator activity"/>
    <property type="evidence" value="ECO:0000318"/>
    <property type="project" value="GO_Central"/>
</dbReference>
<dbReference type="GO" id="GO:0008270">
    <property type="term" value="F:zinc ion binding"/>
    <property type="evidence" value="ECO:0007669"/>
    <property type="project" value="UniProtKB-KW"/>
</dbReference>
<dbReference type="GO" id="GO:0006357">
    <property type="term" value="P:regulation of transcription by RNA polymerase II"/>
    <property type="evidence" value="ECO:0000318"/>
    <property type="project" value="GO_Central"/>
</dbReference>
<dbReference type="CDD" id="cd02208">
    <property type="entry name" value="cupin_RmlC-like"/>
    <property type="match status" value="1"/>
</dbReference>
<dbReference type="FunFam" id="2.60.120.650:FF:000004">
    <property type="entry name" value="Putative lysine-specific demethylase 3B"/>
    <property type="match status" value="1"/>
</dbReference>
<dbReference type="Gene3D" id="2.60.120.650">
    <property type="entry name" value="Cupin"/>
    <property type="match status" value="1"/>
</dbReference>
<dbReference type="InterPro" id="IPR054294">
    <property type="entry name" value="DUF7030"/>
</dbReference>
<dbReference type="InterPro" id="IPR045109">
    <property type="entry name" value="JHDM2-like"/>
</dbReference>
<dbReference type="InterPro" id="IPR003347">
    <property type="entry name" value="JmjC_dom"/>
</dbReference>
<dbReference type="InterPro" id="IPR054503">
    <property type="entry name" value="KDM3AB_Tudor"/>
</dbReference>
<dbReference type="InterPro" id="IPR054504">
    <property type="entry name" value="PWWP_KDM3B"/>
</dbReference>
<dbReference type="PANTHER" id="PTHR12549">
    <property type="entry name" value="JMJC DOMAIN-CONTAINING HISTONE DEMETHYLATION PROTEIN"/>
    <property type="match status" value="1"/>
</dbReference>
<dbReference type="PANTHER" id="PTHR12549:SF7">
    <property type="entry name" value="LYSINE-SPECIFIC DEMETHYLASE 3A"/>
    <property type="match status" value="1"/>
</dbReference>
<dbReference type="Pfam" id="PF22989">
    <property type="entry name" value="DUF7030"/>
    <property type="match status" value="1"/>
</dbReference>
<dbReference type="Pfam" id="PF02373">
    <property type="entry name" value="JmjC"/>
    <property type="match status" value="1"/>
</dbReference>
<dbReference type="Pfam" id="PF22988">
    <property type="entry name" value="PWWP_KDM3B"/>
    <property type="match status" value="1"/>
</dbReference>
<dbReference type="Pfam" id="PF22987">
    <property type="entry name" value="Tudor_KDM3B"/>
    <property type="match status" value="1"/>
</dbReference>
<dbReference type="SMART" id="SM00558">
    <property type="entry name" value="JmjC"/>
    <property type="match status" value="1"/>
</dbReference>
<dbReference type="SUPFAM" id="SSF51197">
    <property type="entry name" value="Clavaminate synthase-like"/>
    <property type="match status" value="1"/>
</dbReference>
<dbReference type="PROSITE" id="PS51184">
    <property type="entry name" value="JMJC"/>
    <property type="match status" value="1"/>
</dbReference>
<name>KD3AB_XENLA</name>
<reference key="1">
    <citation type="submission" date="2005-01" db="EMBL/GenBank/DDBJ databases">
        <authorList>
            <consortium name="NIH - Xenopus Gene Collection (XGC) project"/>
        </authorList>
    </citation>
    <scope>NUCLEOTIDE SEQUENCE [LARGE SCALE MRNA]</scope>
    <source>
        <tissue>Egg</tissue>
    </source>
</reference>
<keyword id="KW-0156">Chromatin regulator</keyword>
<keyword id="KW-0963">Cytoplasm</keyword>
<keyword id="KW-0223">Dioxygenase</keyword>
<keyword id="KW-0408">Iron</keyword>
<keyword id="KW-0479">Metal-binding</keyword>
<keyword id="KW-0539">Nucleus</keyword>
<keyword id="KW-0560">Oxidoreductase</keyword>
<keyword id="KW-1185">Reference proteome</keyword>
<keyword id="KW-0804">Transcription</keyword>
<keyword id="KW-0805">Transcription regulation</keyword>
<keyword id="KW-0862">Zinc</keyword>
<keyword id="KW-0863">Zinc-finger</keyword>
<protein>
    <recommendedName>
        <fullName>Lysine-specific demethylase 3A-B</fullName>
        <ecNumber evidence="2">1.14.11.65</ecNumber>
    </recommendedName>
    <alternativeName>
        <fullName>JmjC domain-containing histone demethylation protein 2A</fullName>
    </alternativeName>
    <alternativeName>
        <fullName>Jumonji domain-containing protein 1A-B</fullName>
    </alternativeName>
    <alternativeName>
        <fullName evidence="6">[histone H3]-dimethyl-L-lysine(9) demethylase 3A-B</fullName>
    </alternativeName>
</protein>
<organism>
    <name type="scientific">Xenopus laevis</name>
    <name type="common">African clawed frog</name>
    <dbReference type="NCBI Taxonomy" id="8355"/>
    <lineage>
        <taxon>Eukaryota</taxon>
        <taxon>Metazoa</taxon>
        <taxon>Chordata</taxon>
        <taxon>Craniata</taxon>
        <taxon>Vertebrata</taxon>
        <taxon>Euteleostomi</taxon>
        <taxon>Amphibia</taxon>
        <taxon>Batrachia</taxon>
        <taxon>Anura</taxon>
        <taxon>Pipoidea</taxon>
        <taxon>Pipidae</taxon>
        <taxon>Xenopodinae</taxon>
        <taxon>Xenopus</taxon>
        <taxon>Xenopus</taxon>
    </lineage>
</organism>
<evidence type="ECO:0000250" key="1"/>
<evidence type="ECO:0000250" key="2">
    <source>
        <dbReference type="UniProtKB" id="Q9Y4C1"/>
    </source>
</evidence>
<evidence type="ECO:0000255" key="3"/>
<evidence type="ECO:0000255" key="4">
    <source>
        <dbReference type="PROSITE-ProRule" id="PRU00538"/>
    </source>
</evidence>
<evidence type="ECO:0000256" key="5">
    <source>
        <dbReference type="SAM" id="MobiDB-lite"/>
    </source>
</evidence>
<evidence type="ECO:0000305" key="6"/>